<protein>
    <recommendedName>
        <fullName evidence="1">Ribosomal RNA small subunit methyltransferase A</fullName>
        <ecNumber evidence="1">2.1.1.182</ecNumber>
    </recommendedName>
    <alternativeName>
        <fullName evidence="1">16S rRNA (adenine(1518)-N(6)/adenine(1519)-N(6))-dimethyltransferase</fullName>
    </alternativeName>
    <alternativeName>
        <fullName evidence="1">16S rRNA dimethyladenosine transferase</fullName>
    </alternativeName>
    <alternativeName>
        <fullName evidence="1">16S rRNA dimethylase</fullName>
    </alternativeName>
    <alternativeName>
        <fullName evidence="1">S-adenosylmethionine-6-N', N'-adenosyl(rRNA) dimethyltransferase</fullName>
    </alternativeName>
</protein>
<accession>A0LA32</accession>
<dbReference type="EC" id="2.1.1.182" evidence="1"/>
<dbReference type="EMBL" id="CP000471">
    <property type="protein sequence ID" value="ABK44825.1"/>
    <property type="molecule type" value="Genomic_DNA"/>
</dbReference>
<dbReference type="RefSeq" id="WP_011713946.1">
    <property type="nucleotide sequence ID" value="NC_008576.1"/>
</dbReference>
<dbReference type="SMR" id="A0LA32"/>
<dbReference type="STRING" id="156889.Mmc1_2325"/>
<dbReference type="KEGG" id="mgm:Mmc1_2325"/>
<dbReference type="eggNOG" id="COG0030">
    <property type="taxonomic scope" value="Bacteria"/>
</dbReference>
<dbReference type="HOGENOM" id="CLU_041220_0_1_5"/>
<dbReference type="OrthoDB" id="9814755at2"/>
<dbReference type="Proteomes" id="UP000002586">
    <property type="component" value="Chromosome"/>
</dbReference>
<dbReference type="GO" id="GO:0005829">
    <property type="term" value="C:cytosol"/>
    <property type="evidence" value="ECO:0007669"/>
    <property type="project" value="TreeGrafter"/>
</dbReference>
<dbReference type="GO" id="GO:0052908">
    <property type="term" value="F:16S rRNA (adenine(1518)-N(6)/adenine(1519)-N(6))-dimethyltransferase activity"/>
    <property type="evidence" value="ECO:0007669"/>
    <property type="project" value="UniProtKB-EC"/>
</dbReference>
<dbReference type="GO" id="GO:0003723">
    <property type="term" value="F:RNA binding"/>
    <property type="evidence" value="ECO:0007669"/>
    <property type="project" value="UniProtKB-KW"/>
</dbReference>
<dbReference type="FunFam" id="1.10.8.100:FF:000001">
    <property type="entry name" value="Ribosomal RNA small subunit methyltransferase A"/>
    <property type="match status" value="1"/>
</dbReference>
<dbReference type="FunFam" id="3.40.50.150:FF:000023">
    <property type="entry name" value="Ribosomal RNA small subunit methyltransferase A"/>
    <property type="match status" value="1"/>
</dbReference>
<dbReference type="Gene3D" id="1.10.8.100">
    <property type="entry name" value="Ribosomal RNA adenine dimethylase-like, domain 2"/>
    <property type="match status" value="1"/>
</dbReference>
<dbReference type="Gene3D" id="3.40.50.150">
    <property type="entry name" value="Vaccinia Virus protein VP39"/>
    <property type="match status" value="1"/>
</dbReference>
<dbReference type="HAMAP" id="MF_00607">
    <property type="entry name" value="16SrRNA_methyltr_A"/>
    <property type="match status" value="1"/>
</dbReference>
<dbReference type="InterPro" id="IPR001737">
    <property type="entry name" value="KsgA/Erm"/>
</dbReference>
<dbReference type="InterPro" id="IPR023165">
    <property type="entry name" value="rRNA_Ade_diMease-like_C"/>
</dbReference>
<dbReference type="InterPro" id="IPR020596">
    <property type="entry name" value="rRNA_Ade_Mease_Trfase_CS"/>
</dbReference>
<dbReference type="InterPro" id="IPR020598">
    <property type="entry name" value="rRNA_Ade_methylase_Trfase_N"/>
</dbReference>
<dbReference type="InterPro" id="IPR011530">
    <property type="entry name" value="rRNA_adenine_dimethylase"/>
</dbReference>
<dbReference type="InterPro" id="IPR029063">
    <property type="entry name" value="SAM-dependent_MTases_sf"/>
</dbReference>
<dbReference type="NCBIfam" id="TIGR00755">
    <property type="entry name" value="ksgA"/>
    <property type="match status" value="1"/>
</dbReference>
<dbReference type="PANTHER" id="PTHR11727">
    <property type="entry name" value="DIMETHYLADENOSINE TRANSFERASE"/>
    <property type="match status" value="1"/>
</dbReference>
<dbReference type="PANTHER" id="PTHR11727:SF7">
    <property type="entry name" value="DIMETHYLADENOSINE TRANSFERASE-RELATED"/>
    <property type="match status" value="1"/>
</dbReference>
<dbReference type="Pfam" id="PF00398">
    <property type="entry name" value="RrnaAD"/>
    <property type="match status" value="1"/>
</dbReference>
<dbReference type="SMART" id="SM00650">
    <property type="entry name" value="rADc"/>
    <property type="match status" value="1"/>
</dbReference>
<dbReference type="SUPFAM" id="SSF53335">
    <property type="entry name" value="S-adenosyl-L-methionine-dependent methyltransferases"/>
    <property type="match status" value="1"/>
</dbReference>
<dbReference type="PROSITE" id="PS01131">
    <property type="entry name" value="RRNA_A_DIMETH"/>
    <property type="match status" value="1"/>
</dbReference>
<dbReference type="PROSITE" id="PS51689">
    <property type="entry name" value="SAM_RNA_A_N6_MT"/>
    <property type="match status" value="1"/>
</dbReference>
<feature type="chain" id="PRO_1000072651" description="Ribosomal RNA small subunit methyltransferase A">
    <location>
        <begin position="1"/>
        <end position="279"/>
    </location>
</feature>
<feature type="binding site" evidence="1">
    <location>
        <position position="25"/>
    </location>
    <ligand>
        <name>S-adenosyl-L-methionine</name>
        <dbReference type="ChEBI" id="CHEBI:59789"/>
    </ligand>
</feature>
<feature type="binding site" evidence="1">
    <location>
        <position position="27"/>
    </location>
    <ligand>
        <name>S-adenosyl-L-methionine</name>
        <dbReference type="ChEBI" id="CHEBI:59789"/>
    </ligand>
</feature>
<feature type="binding site" evidence="1">
    <location>
        <position position="52"/>
    </location>
    <ligand>
        <name>S-adenosyl-L-methionine</name>
        <dbReference type="ChEBI" id="CHEBI:59789"/>
    </ligand>
</feature>
<feature type="binding site" evidence="1">
    <location>
        <position position="73"/>
    </location>
    <ligand>
        <name>S-adenosyl-L-methionine</name>
        <dbReference type="ChEBI" id="CHEBI:59789"/>
    </ligand>
</feature>
<feature type="binding site" evidence="1">
    <location>
        <position position="98"/>
    </location>
    <ligand>
        <name>S-adenosyl-L-methionine</name>
        <dbReference type="ChEBI" id="CHEBI:59789"/>
    </ligand>
</feature>
<feature type="binding site" evidence="1">
    <location>
        <position position="120"/>
    </location>
    <ligand>
        <name>S-adenosyl-L-methionine</name>
        <dbReference type="ChEBI" id="CHEBI:59789"/>
    </ligand>
</feature>
<gene>
    <name evidence="1" type="primary">rsmA</name>
    <name evidence="1" type="synonym">ksgA</name>
    <name type="ordered locus">Mmc1_2325</name>
</gene>
<sequence length="279" mass="30185">MSHYGRIKLLLEQHGLSPNKRFGQNFLVDPSVAPRIVALAGIKAGDRVLEIGPGVGSLTIPLLQKAGAVTAVEKDRKLLPLLRVEAAGVGALTLVEEDALLVDYTALAQQLGGPLKLAANLPYNISTPLMVHLLDHHAAFECMALMFQKEVAQRLAAEPGSKAYGALTVQCALWAEIRHGFDVPPAAFLPAPKVTSAVVHVQMMRQPRVAVEDERHFVRVVKAAFAQRRKTLRNTLKTICPDPNRWLEQAGIDGALRAEVLTLAQFAQLANTPMPTSAP</sequence>
<evidence type="ECO:0000255" key="1">
    <source>
        <dbReference type="HAMAP-Rule" id="MF_00607"/>
    </source>
</evidence>
<organism>
    <name type="scientific">Magnetococcus marinus (strain ATCC BAA-1437 / JCM 17883 / MC-1)</name>
    <dbReference type="NCBI Taxonomy" id="156889"/>
    <lineage>
        <taxon>Bacteria</taxon>
        <taxon>Pseudomonadati</taxon>
        <taxon>Pseudomonadota</taxon>
        <taxon>Alphaproteobacteria</taxon>
        <taxon>Magnetococcales</taxon>
        <taxon>Magnetococcaceae</taxon>
        <taxon>Magnetococcus</taxon>
    </lineage>
</organism>
<comment type="function">
    <text evidence="1">Specifically dimethylates two adjacent adenosines (A1518 and A1519) in the loop of a conserved hairpin near the 3'-end of 16S rRNA in the 30S particle. May play a critical role in biogenesis of 30S subunits.</text>
</comment>
<comment type="catalytic activity">
    <reaction evidence="1">
        <text>adenosine(1518)/adenosine(1519) in 16S rRNA + 4 S-adenosyl-L-methionine = N(6)-dimethyladenosine(1518)/N(6)-dimethyladenosine(1519) in 16S rRNA + 4 S-adenosyl-L-homocysteine + 4 H(+)</text>
        <dbReference type="Rhea" id="RHEA:19609"/>
        <dbReference type="Rhea" id="RHEA-COMP:10232"/>
        <dbReference type="Rhea" id="RHEA-COMP:10233"/>
        <dbReference type="ChEBI" id="CHEBI:15378"/>
        <dbReference type="ChEBI" id="CHEBI:57856"/>
        <dbReference type="ChEBI" id="CHEBI:59789"/>
        <dbReference type="ChEBI" id="CHEBI:74411"/>
        <dbReference type="ChEBI" id="CHEBI:74493"/>
        <dbReference type="EC" id="2.1.1.182"/>
    </reaction>
</comment>
<comment type="subcellular location">
    <subcellularLocation>
        <location evidence="1">Cytoplasm</location>
    </subcellularLocation>
</comment>
<comment type="similarity">
    <text evidence="1">Belongs to the class I-like SAM-binding methyltransferase superfamily. rRNA adenine N(6)-methyltransferase family. RsmA subfamily.</text>
</comment>
<proteinExistence type="inferred from homology"/>
<keyword id="KW-0963">Cytoplasm</keyword>
<keyword id="KW-0489">Methyltransferase</keyword>
<keyword id="KW-1185">Reference proteome</keyword>
<keyword id="KW-0694">RNA-binding</keyword>
<keyword id="KW-0698">rRNA processing</keyword>
<keyword id="KW-0949">S-adenosyl-L-methionine</keyword>
<keyword id="KW-0808">Transferase</keyword>
<name>RSMA_MAGMM</name>
<reference key="1">
    <citation type="journal article" date="2009" name="Appl. Environ. Microbiol.">
        <title>Complete genome sequence of the chemolithoautotrophic marine magnetotactic coccus strain MC-1.</title>
        <authorList>
            <person name="Schubbe S."/>
            <person name="Williams T.J."/>
            <person name="Xie G."/>
            <person name="Kiss H.E."/>
            <person name="Brettin T.S."/>
            <person name="Martinez D."/>
            <person name="Ross C.A."/>
            <person name="Schuler D."/>
            <person name="Cox B.L."/>
            <person name="Nealson K.H."/>
            <person name="Bazylinski D.A."/>
        </authorList>
    </citation>
    <scope>NUCLEOTIDE SEQUENCE [LARGE SCALE GENOMIC DNA]</scope>
    <source>
        <strain>ATCC BAA-1437 / JCM 17883 / MC-1</strain>
    </source>
</reference>